<dbReference type="EMBL" id="X79516">
    <property type="protein sequence ID" value="CAA56052.1"/>
    <property type="molecule type" value="Genomic_DNA"/>
</dbReference>
<dbReference type="EMBL" id="CP001956">
    <property type="protein sequence ID" value="ADE03880.1"/>
    <property type="molecule type" value="Genomic_DNA"/>
</dbReference>
<dbReference type="PIR" id="S55896">
    <property type="entry name" value="S45145"/>
</dbReference>
<dbReference type="RefSeq" id="WP_004044606.1">
    <property type="nucleotide sequence ID" value="NC_013967.1"/>
</dbReference>
<dbReference type="SMR" id="Q48333"/>
<dbReference type="STRING" id="309800.HVO_0317"/>
<dbReference type="PaxDb" id="309800-C498_17103"/>
<dbReference type="EnsemblBacteria" id="ADE03880">
    <property type="protein sequence ID" value="ADE03880"/>
    <property type="gene ID" value="HVO_0317"/>
</dbReference>
<dbReference type="GeneID" id="8926298"/>
<dbReference type="KEGG" id="hvo:HVO_0317"/>
<dbReference type="eggNOG" id="arCOG00865">
    <property type="taxonomic scope" value="Archaea"/>
</dbReference>
<dbReference type="HOGENOM" id="CLU_022916_0_0_2"/>
<dbReference type="OrthoDB" id="32941at2157"/>
<dbReference type="Proteomes" id="UP000008243">
    <property type="component" value="Chromosome"/>
</dbReference>
<dbReference type="GO" id="GO:0005886">
    <property type="term" value="C:plasma membrane"/>
    <property type="evidence" value="ECO:0007669"/>
    <property type="project" value="UniProtKB-SubCell"/>
</dbReference>
<dbReference type="GO" id="GO:0033178">
    <property type="term" value="C:proton-transporting two-sector ATPase complex, catalytic domain"/>
    <property type="evidence" value="ECO:0007669"/>
    <property type="project" value="InterPro"/>
</dbReference>
<dbReference type="GO" id="GO:0005524">
    <property type="term" value="F:ATP binding"/>
    <property type="evidence" value="ECO:0007669"/>
    <property type="project" value="UniProtKB-UniRule"/>
</dbReference>
<dbReference type="GO" id="GO:0046933">
    <property type="term" value="F:proton-transporting ATP synthase activity, rotational mechanism"/>
    <property type="evidence" value="ECO:0007669"/>
    <property type="project" value="UniProtKB-UniRule"/>
</dbReference>
<dbReference type="GO" id="GO:0042777">
    <property type="term" value="P:proton motive force-driven plasma membrane ATP synthesis"/>
    <property type="evidence" value="ECO:0007669"/>
    <property type="project" value="UniProtKB-UniRule"/>
</dbReference>
<dbReference type="CDD" id="cd18112">
    <property type="entry name" value="ATP-synt_V_A-type_beta_C"/>
    <property type="match status" value="1"/>
</dbReference>
<dbReference type="CDD" id="cd18118">
    <property type="entry name" value="ATP-synt_V_A-type_beta_N"/>
    <property type="match status" value="1"/>
</dbReference>
<dbReference type="CDD" id="cd01135">
    <property type="entry name" value="V_A-ATPase_B"/>
    <property type="match status" value="1"/>
</dbReference>
<dbReference type="Gene3D" id="3.40.50.12240">
    <property type="match status" value="1"/>
</dbReference>
<dbReference type="HAMAP" id="MF_00310">
    <property type="entry name" value="ATP_synth_B_arch"/>
    <property type="match status" value="1"/>
</dbReference>
<dbReference type="InterPro" id="IPR055190">
    <property type="entry name" value="ATP-synt_VA_C"/>
</dbReference>
<dbReference type="InterPro" id="IPR020003">
    <property type="entry name" value="ATPase_a/bsu_AS"/>
</dbReference>
<dbReference type="InterPro" id="IPR005724">
    <property type="entry name" value="ATPase_A1-cplx_bsu"/>
</dbReference>
<dbReference type="InterPro" id="IPR004100">
    <property type="entry name" value="ATPase_F1/V1/A1_a/bsu_N"/>
</dbReference>
<dbReference type="InterPro" id="IPR000194">
    <property type="entry name" value="ATPase_F1/V1/A1_a/bsu_nucl-bd"/>
</dbReference>
<dbReference type="InterPro" id="IPR027417">
    <property type="entry name" value="P-loop_NTPase"/>
</dbReference>
<dbReference type="InterPro" id="IPR022879">
    <property type="entry name" value="V-ATPase_su_B/beta"/>
</dbReference>
<dbReference type="NCBIfam" id="TIGR01041">
    <property type="entry name" value="ATP_syn_B_arch"/>
    <property type="match status" value="1"/>
</dbReference>
<dbReference type="NCBIfam" id="NF003235">
    <property type="entry name" value="PRK04196.1"/>
    <property type="match status" value="1"/>
</dbReference>
<dbReference type="PANTHER" id="PTHR43389">
    <property type="entry name" value="V-TYPE PROTON ATPASE SUBUNIT B"/>
    <property type="match status" value="1"/>
</dbReference>
<dbReference type="PANTHER" id="PTHR43389:SF4">
    <property type="entry name" value="V-TYPE PROTON ATPASE SUBUNIT B"/>
    <property type="match status" value="1"/>
</dbReference>
<dbReference type="Pfam" id="PF00006">
    <property type="entry name" value="ATP-synt_ab"/>
    <property type="match status" value="1"/>
</dbReference>
<dbReference type="Pfam" id="PF02874">
    <property type="entry name" value="ATP-synt_ab_N"/>
    <property type="match status" value="1"/>
</dbReference>
<dbReference type="Pfam" id="PF22919">
    <property type="entry name" value="ATP-synt_VA_C"/>
    <property type="match status" value="1"/>
</dbReference>
<dbReference type="PIRSF" id="PIRSF039114">
    <property type="entry name" value="V-ATPsynth_beta/V-ATPase_B"/>
    <property type="match status" value="1"/>
</dbReference>
<dbReference type="SUPFAM" id="SSF47917">
    <property type="entry name" value="C-terminal domain of alpha and beta subunits of F1 ATP synthase"/>
    <property type="match status" value="1"/>
</dbReference>
<dbReference type="SUPFAM" id="SSF52540">
    <property type="entry name" value="P-loop containing nucleoside triphosphate hydrolases"/>
    <property type="match status" value="1"/>
</dbReference>
<dbReference type="PROSITE" id="PS00152">
    <property type="entry name" value="ATPASE_ALPHA_BETA"/>
    <property type="match status" value="1"/>
</dbReference>
<feature type="chain" id="PRO_0000144653" description="A-type ATP synthase subunit B">
    <location>
        <begin position="1"/>
        <end position="468"/>
    </location>
</feature>
<feature type="sequence conflict" description="In Ref. 1; CAA56052." evidence="2" ref="1">
    <original>A</original>
    <variation>R</variation>
    <location>
        <position position="468"/>
    </location>
</feature>
<proteinExistence type="evidence at protein level"/>
<sequence>MKEYQTITEISGPLVFAEVDEPIGYDEIVEIETPQGETKRGQVLESSEGLVAIQVFEGTSGIDRNASVRFLGETLKMPVTEDLLGRVLDGSGQPIDGGPEIVPDERRDIVGAAINPYSREYPEEFIQTGVSAIDGMNTLVRGQKLPIFSASGLPHNDLALQIARQATVPEDEESGEESEFAVVFGAMGITQEEANEFMEDFERTGALERSVVFTNLADDPAVERTVTPRLALTTAEYLAFDKDYHVLVILTDMTNYCEALREIGAAREEVPGRRGYPGYMYTDLAQLYERAGRIQGRDGSVTQIPILTMPGDDDTHPIPDLTGYITEGQIYIDRDLNSQGIRPPINPLPSLSRLMDDGIGEGLTREDHADVSDQMYAAYAEGEDLRDLVNIVGREALSERDNKYLDFAERFEAEFVNQGFDTDRSIEDTLDIGWDLLSTLPKSELNRIDEELIEDYYEDDAESVEAEA</sequence>
<reference key="1">
    <citation type="journal article" date="1995" name="Biochim. Biophys. Acta">
        <title>Nucleotide sequence of the ATPase A- and B-subunits of the halophilic archaebacterium Haloferax volcanii and characterization of the enzyme.</title>
        <authorList>
            <person name="Steinert K."/>
            <person name="Kroth-Pancic P.G."/>
            <person name="Bickel-Sandkoetter S."/>
        </authorList>
    </citation>
    <scope>NUCLEOTIDE SEQUENCE [GENOMIC DNA]</scope>
    <scope>CHARACTERIZATION</scope>
    <source>
        <strain>DS2 / WR 340</strain>
    </source>
</reference>
<reference key="2">
    <citation type="journal article" date="2010" name="PLoS ONE">
        <title>The complete genome sequence of Haloferax volcanii DS2, a model archaeon.</title>
        <authorList>
            <person name="Hartman A.L."/>
            <person name="Norais C."/>
            <person name="Badger J.H."/>
            <person name="Delmas S."/>
            <person name="Haldenby S."/>
            <person name="Madupu R."/>
            <person name="Robinson J."/>
            <person name="Khouri H."/>
            <person name="Ren Q."/>
            <person name="Lowe T.M."/>
            <person name="Maupin-Furlow J."/>
            <person name="Pohlschroder M."/>
            <person name="Daniels C."/>
            <person name="Pfeiffer F."/>
            <person name="Allers T."/>
            <person name="Eisen J.A."/>
        </authorList>
    </citation>
    <scope>NUCLEOTIDE SEQUENCE [LARGE SCALE GENOMIC DNA]</scope>
    <source>
        <strain>ATCC 29605 / DSM 3757 / JCM 8879 / NBRC 14742 / NCIMB 2012 / VKM B-1768 / DS2</strain>
    </source>
</reference>
<accession>Q48333</accession>
<accession>D4GZU6</accession>
<comment type="function">
    <text evidence="1">Component of the A-type ATP synthase that produces ATP from ADP in the presence of a proton gradient across the membrane. The B chain is a regulatory subunit.</text>
</comment>
<comment type="subunit">
    <text evidence="1">Has multiple subunits with at least A(3), B(3), C, D, E, F, H, I and proteolipid K(x).</text>
</comment>
<comment type="subcellular location">
    <subcellularLocation>
        <location evidence="1">Cell membrane</location>
        <topology evidence="1">Peripheral membrane protein</topology>
    </subcellularLocation>
</comment>
<comment type="similarity">
    <text evidence="1">Belongs to the ATPase alpha/beta chains family.</text>
</comment>
<organism>
    <name type="scientific">Haloferax volcanii (strain ATCC 29605 / DSM 3757 / JCM 8879 / NBRC 14742 / NCIMB 2012 / VKM B-1768 / DS2)</name>
    <name type="common">Halobacterium volcanii</name>
    <dbReference type="NCBI Taxonomy" id="309800"/>
    <lineage>
        <taxon>Archaea</taxon>
        <taxon>Methanobacteriati</taxon>
        <taxon>Methanobacteriota</taxon>
        <taxon>Stenosarchaea group</taxon>
        <taxon>Halobacteria</taxon>
        <taxon>Halobacteriales</taxon>
        <taxon>Haloferacaceae</taxon>
        <taxon>Haloferax</taxon>
    </lineage>
</organism>
<gene>
    <name evidence="1" type="primary">atpB</name>
    <name type="ordered locus">HVO_0317</name>
</gene>
<protein>
    <recommendedName>
        <fullName evidence="1">A-type ATP synthase subunit B</fullName>
    </recommendedName>
</protein>
<name>AATB_HALVD</name>
<keyword id="KW-0066">ATP synthesis</keyword>
<keyword id="KW-1003">Cell membrane</keyword>
<keyword id="KW-0375">Hydrogen ion transport</keyword>
<keyword id="KW-0406">Ion transport</keyword>
<keyword id="KW-0472">Membrane</keyword>
<keyword id="KW-1185">Reference proteome</keyword>
<keyword id="KW-0813">Transport</keyword>
<evidence type="ECO:0000255" key="1">
    <source>
        <dbReference type="HAMAP-Rule" id="MF_00310"/>
    </source>
</evidence>
<evidence type="ECO:0000305" key="2"/>